<reference key="1">
    <citation type="journal article" date="2010" name="Genome Biol.">
        <title>Structure and dynamics of the pan-genome of Streptococcus pneumoniae and closely related species.</title>
        <authorList>
            <person name="Donati C."/>
            <person name="Hiller N.L."/>
            <person name="Tettelin H."/>
            <person name="Muzzi A."/>
            <person name="Croucher N.J."/>
            <person name="Angiuoli S.V."/>
            <person name="Oggioni M."/>
            <person name="Dunning Hotopp J.C."/>
            <person name="Hu F.Z."/>
            <person name="Riley D.R."/>
            <person name="Covacci A."/>
            <person name="Mitchell T.J."/>
            <person name="Bentley S.D."/>
            <person name="Kilian M."/>
            <person name="Ehrlich G.D."/>
            <person name="Rappuoli R."/>
            <person name="Moxon E.R."/>
            <person name="Masignani V."/>
        </authorList>
    </citation>
    <scope>NUCLEOTIDE SEQUENCE [LARGE SCALE GENOMIC DNA]</scope>
    <source>
        <strain>JJA</strain>
    </source>
</reference>
<name>GATC_STRZJ</name>
<accession>C1CCK1</accession>
<protein>
    <recommendedName>
        <fullName evidence="1">Aspartyl/glutamyl-tRNA(Asn/Gln) amidotransferase subunit C</fullName>
        <shortName evidence="1">Asp/Glu-ADT subunit C</shortName>
        <ecNumber evidence="1">6.3.5.-</ecNumber>
    </recommendedName>
</protein>
<sequence>MKITQEEVTHVANLSKLRFSEEETAAFATTLSKIVDMVELLGEVDTTGVAPTTTMADRKTVLRPDVAEEGTDRDRLFKNVPEQDNYYIKVPAILDDGGDA</sequence>
<keyword id="KW-0067">ATP-binding</keyword>
<keyword id="KW-0436">Ligase</keyword>
<keyword id="KW-0547">Nucleotide-binding</keyword>
<keyword id="KW-0648">Protein biosynthesis</keyword>
<dbReference type="EC" id="6.3.5.-" evidence="1"/>
<dbReference type="EMBL" id="CP000919">
    <property type="protein sequence ID" value="ACO18079.1"/>
    <property type="molecule type" value="Genomic_DNA"/>
</dbReference>
<dbReference type="RefSeq" id="WP_000705421.1">
    <property type="nucleotide sequence ID" value="NC_012466.1"/>
</dbReference>
<dbReference type="SMR" id="C1CCK1"/>
<dbReference type="KEGG" id="sjj:SPJ_0422"/>
<dbReference type="HOGENOM" id="CLU_105899_1_2_9"/>
<dbReference type="Proteomes" id="UP000002206">
    <property type="component" value="Chromosome"/>
</dbReference>
<dbReference type="GO" id="GO:0050566">
    <property type="term" value="F:asparaginyl-tRNA synthase (glutamine-hydrolyzing) activity"/>
    <property type="evidence" value="ECO:0007669"/>
    <property type="project" value="RHEA"/>
</dbReference>
<dbReference type="GO" id="GO:0005524">
    <property type="term" value="F:ATP binding"/>
    <property type="evidence" value="ECO:0007669"/>
    <property type="project" value="UniProtKB-KW"/>
</dbReference>
<dbReference type="GO" id="GO:0050567">
    <property type="term" value="F:glutaminyl-tRNA synthase (glutamine-hydrolyzing) activity"/>
    <property type="evidence" value="ECO:0007669"/>
    <property type="project" value="UniProtKB-UniRule"/>
</dbReference>
<dbReference type="GO" id="GO:0070681">
    <property type="term" value="P:glutaminyl-tRNAGln biosynthesis via transamidation"/>
    <property type="evidence" value="ECO:0007669"/>
    <property type="project" value="TreeGrafter"/>
</dbReference>
<dbReference type="GO" id="GO:0006450">
    <property type="term" value="P:regulation of translational fidelity"/>
    <property type="evidence" value="ECO:0007669"/>
    <property type="project" value="InterPro"/>
</dbReference>
<dbReference type="GO" id="GO:0006412">
    <property type="term" value="P:translation"/>
    <property type="evidence" value="ECO:0007669"/>
    <property type="project" value="UniProtKB-UniRule"/>
</dbReference>
<dbReference type="Gene3D" id="1.10.20.60">
    <property type="entry name" value="Glu-tRNAGln amidotransferase C subunit, N-terminal domain"/>
    <property type="match status" value="1"/>
</dbReference>
<dbReference type="HAMAP" id="MF_00122">
    <property type="entry name" value="GatC"/>
    <property type="match status" value="1"/>
</dbReference>
<dbReference type="InterPro" id="IPR036113">
    <property type="entry name" value="Asp/Glu-ADT_sf_sub_c"/>
</dbReference>
<dbReference type="InterPro" id="IPR003837">
    <property type="entry name" value="GatC"/>
</dbReference>
<dbReference type="NCBIfam" id="TIGR00135">
    <property type="entry name" value="gatC"/>
    <property type="match status" value="1"/>
</dbReference>
<dbReference type="PANTHER" id="PTHR15004">
    <property type="entry name" value="GLUTAMYL-TRNA(GLN) AMIDOTRANSFERASE SUBUNIT C, MITOCHONDRIAL"/>
    <property type="match status" value="1"/>
</dbReference>
<dbReference type="PANTHER" id="PTHR15004:SF0">
    <property type="entry name" value="GLUTAMYL-TRNA(GLN) AMIDOTRANSFERASE SUBUNIT C, MITOCHONDRIAL"/>
    <property type="match status" value="1"/>
</dbReference>
<dbReference type="Pfam" id="PF02686">
    <property type="entry name" value="GatC"/>
    <property type="match status" value="1"/>
</dbReference>
<dbReference type="SUPFAM" id="SSF141000">
    <property type="entry name" value="Glu-tRNAGln amidotransferase C subunit"/>
    <property type="match status" value="1"/>
</dbReference>
<evidence type="ECO:0000255" key="1">
    <source>
        <dbReference type="HAMAP-Rule" id="MF_00122"/>
    </source>
</evidence>
<comment type="function">
    <text evidence="1">Allows the formation of correctly charged Asn-tRNA(Asn) or Gln-tRNA(Gln) through the transamidation of misacylated Asp-tRNA(Asn) or Glu-tRNA(Gln) in organisms which lack either or both of asparaginyl-tRNA or glutaminyl-tRNA synthetases. The reaction takes place in the presence of glutamine and ATP through an activated phospho-Asp-tRNA(Asn) or phospho-Glu-tRNA(Gln).</text>
</comment>
<comment type="catalytic activity">
    <reaction evidence="1">
        <text>L-glutamyl-tRNA(Gln) + L-glutamine + ATP + H2O = L-glutaminyl-tRNA(Gln) + L-glutamate + ADP + phosphate + H(+)</text>
        <dbReference type="Rhea" id="RHEA:17521"/>
        <dbReference type="Rhea" id="RHEA-COMP:9681"/>
        <dbReference type="Rhea" id="RHEA-COMP:9684"/>
        <dbReference type="ChEBI" id="CHEBI:15377"/>
        <dbReference type="ChEBI" id="CHEBI:15378"/>
        <dbReference type="ChEBI" id="CHEBI:29985"/>
        <dbReference type="ChEBI" id="CHEBI:30616"/>
        <dbReference type="ChEBI" id="CHEBI:43474"/>
        <dbReference type="ChEBI" id="CHEBI:58359"/>
        <dbReference type="ChEBI" id="CHEBI:78520"/>
        <dbReference type="ChEBI" id="CHEBI:78521"/>
        <dbReference type="ChEBI" id="CHEBI:456216"/>
    </reaction>
</comment>
<comment type="catalytic activity">
    <reaction evidence="1">
        <text>L-aspartyl-tRNA(Asn) + L-glutamine + ATP + H2O = L-asparaginyl-tRNA(Asn) + L-glutamate + ADP + phosphate + 2 H(+)</text>
        <dbReference type="Rhea" id="RHEA:14513"/>
        <dbReference type="Rhea" id="RHEA-COMP:9674"/>
        <dbReference type="Rhea" id="RHEA-COMP:9677"/>
        <dbReference type="ChEBI" id="CHEBI:15377"/>
        <dbReference type="ChEBI" id="CHEBI:15378"/>
        <dbReference type="ChEBI" id="CHEBI:29985"/>
        <dbReference type="ChEBI" id="CHEBI:30616"/>
        <dbReference type="ChEBI" id="CHEBI:43474"/>
        <dbReference type="ChEBI" id="CHEBI:58359"/>
        <dbReference type="ChEBI" id="CHEBI:78515"/>
        <dbReference type="ChEBI" id="CHEBI:78516"/>
        <dbReference type="ChEBI" id="CHEBI:456216"/>
    </reaction>
</comment>
<comment type="subunit">
    <text evidence="1">Heterotrimer of A, B and C subunits.</text>
</comment>
<comment type="similarity">
    <text evidence="1">Belongs to the GatC family.</text>
</comment>
<gene>
    <name evidence="1" type="primary">gatC</name>
    <name type="ordered locus">SPJ_0422</name>
</gene>
<proteinExistence type="inferred from homology"/>
<organism>
    <name type="scientific">Streptococcus pneumoniae (strain JJA)</name>
    <dbReference type="NCBI Taxonomy" id="488222"/>
    <lineage>
        <taxon>Bacteria</taxon>
        <taxon>Bacillati</taxon>
        <taxon>Bacillota</taxon>
        <taxon>Bacilli</taxon>
        <taxon>Lactobacillales</taxon>
        <taxon>Streptococcaceae</taxon>
        <taxon>Streptococcus</taxon>
    </lineage>
</organism>
<feature type="chain" id="PRO_1000122587" description="Aspartyl/glutamyl-tRNA(Asn/Gln) amidotransferase subunit C">
    <location>
        <begin position="1"/>
        <end position="100"/>
    </location>
</feature>